<proteinExistence type="evidence at protein level"/>
<feature type="chain" id="PRO_0000030729" description="Abrin-a A chain">
    <location>
        <begin position="1"/>
        <end position="251"/>
    </location>
</feature>
<feature type="peptide" id="PRO_0000030730" description="Linker peptide" evidence="4">
    <location>
        <begin position="252"/>
        <end position="261"/>
    </location>
</feature>
<feature type="chain" id="PRO_0000030731" description="Abrin-a B chain">
    <location>
        <begin position="262"/>
        <end position="528"/>
    </location>
</feature>
<feature type="domain" description="Ricin B-type lectin 1" evidence="2">
    <location>
        <begin position="273"/>
        <end position="400"/>
    </location>
</feature>
<feature type="repeat" description="1-alpha">
    <location>
        <begin position="283"/>
        <end position="325"/>
    </location>
</feature>
<feature type="repeat" description="1-beta">
    <location>
        <begin position="326"/>
        <end position="366"/>
    </location>
</feature>
<feature type="repeat" description="1-gamma">
    <location>
        <begin position="369"/>
        <end position="401"/>
    </location>
</feature>
<feature type="domain" description="Ricin B-type lectin 2" evidence="2">
    <location>
        <begin position="403"/>
        <end position="527"/>
    </location>
</feature>
<feature type="repeat" description="2-alpha">
    <location>
        <begin position="414"/>
        <end position="449"/>
    </location>
</feature>
<feature type="repeat" description="2-beta">
    <location>
        <begin position="453"/>
        <end position="492"/>
    </location>
</feature>
<feature type="repeat" description="2-gamma">
    <location>
        <begin position="495"/>
        <end position="528"/>
    </location>
</feature>
<feature type="active site" evidence="1">
    <location>
        <position position="164"/>
    </location>
</feature>
<feature type="modified residue" description="Pyrrolidone carboxylic acid" evidence="5">
    <location>
        <position position="1"/>
    </location>
</feature>
<feature type="glycosylation site" description="N-linked (GlcNAc...) asparagine">
    <location>
        <position position="361"/>
    </location>
</feature>
<feature type="glycosylation site" description="N-linked (GlcNAc...) asparagine">
    <location>
        <position position="401"/>
    </location>
</feature>
<feature type="disulfide bond" description="Interchain (between A and B chains)">
    <location>
        <begin position="247"/>
        <end position="269"/>
    </location>
</feature>
<feature type="disulfide bond">
    <location>
        <begin position="286"/>
        <end position="305"/>
    </location>
</feature>
<feature type="disulfide bond">
    <location>
        <begin position="329"/>
        <end position="346"/>
    </location>
</feature>
<feature type="disulfide bond">
    <location>
        <begin position="417"/>
        <end position="430"/>
    </location>
</feature>
<feature type="disulfide bond">
    <location>
        <begin position="456"/>
        <end position="473"/>
    </location>
</feature>
<feature type="mutagenesis site" description="46-fold less potent protein synthesis inhibition." evidence="3">
    <original>N</original>
    <variation>P</variation>
    <location>
        <position position="200"/>
    </location>
</feature>
<feature type="sequence conflict" description="In Ref. 1; AAA32624." evidence="6" ref="1">
    <original>Q</original>
    <variation>E</variation>
    <location>
        <position position="1"/>
    </location>
</feature>
<feature type="sequence conflict" description="In Ref. 2; AA sequence." evidence="6" ref="2">
    <location>
        <position position="202"/>
    </location>
</feature>
<feature type="sequence conflict" description="In Ref. 4; AA sequence." evidence="6" ref="4">
    <original>N</original>
    <variation>Y</variation>
    <location>
        <position position="298"/>
    </location>
</feature>
<feature type="sequence conflict" description="In Ref. 4; AA sequence." evidence="6" ref="4">
    <original>M</original>
    <variation>L</variation>
    <location>
        <position position="427"/>
    </location>
</feature>
<feature type="sequence conflict" description="In Ref. 4; AA sequence." evidence="6" ref="4">
    <original>T</original>
    <variation>P</variation>
    <location>
        <position position="467"/>
    </location>
</feature>
<feature type="sequence conflict" description="In Ref. 4; AA sequence." evidence="6" ref="4">
    <original>V</original>
    <variation>L</variation>
    <location>
        <position position="483"/>
    </location>
</feature>
<feature type="strand" evidence="8">
    <location>
        <begin position="5"/>
        <end position="8"/>
    </location>
</feature>
<feature type="helix" evidence="8">
    <location>
        <begin position="14"/>
        <end position="28"/>
    </location>
</feature>
<feature type="strand" evidence="8">
    <location>
        <begin position="31"/>
        <end position="33"/>
    </location>
</feature>
<feature type="strand" evidence="8">
    <location>
        <begin position="36"/>
        <end position="38"/>
    </location>
</feature>
<feature type="helix" evidence="8">
    <location>
        <begin position="42"/>
        <end position="44"/>
    </location>
</feature>
<feature type="helix" evidence="8">
    <location>
        <begin position="47"/>
        <end position="49"/>
    </location>
</feature>
<feature type="strand" evidence="8">
    <location>
        <begin position="50"/>
        <end position="59"/>
    </location>
</feature>
<feature type="strand" evidence="8">
    <location>
        <begin position="62"/>
        <end position="69"/>
    </location>
</feature>
<feature type="turn" evidence="8">
    <location>
        <begin position="70"/>
        <end position="72"/>
    </location>
</feature>
<feature type="strand" evidence="8">
    <location>
        <begin position="75"/>
        <end position="80"/>
    </location>
</feature>
<feature type="strand" evidence="8">
    <location>
        <begin position="83"/>
        <end position="86"/>
    </location>
</feature>
<feature type="helix" evidence="8">
    <location>
        <begin position="94"/>
        <end position="97"/>
    </location>
</feature>
<feature type="strand" evidence="8">
    <location>
        <begin position="102"/>
        <end position="106"/>
    </location>
</feature>
<feature type="helix" evidence="8">
    <location>
        <begin position="113"/>
        <end position="120"/>
    </location>
</feature>
<feature type="helix" evidence="8">
    <location>
        <begin position="124"/>
        <end position="126"/>
    </location>
</feature>
<feature type="helix" evidence="8">
    <location>
        <begin position="131"/>
        <end position="143"/>
    </location>
</feature>
<feature type="helix" evidence="8">
    <location>
        <begin position="148"/>
        <end position="167"/>
    </location>
</feature>
<feature type="helix" evidence="8">
    <location>
        <begin position="169"/>
        <end position="181"/>
    </location>
</feature>
<feature type="helix" evidence="8">
    <location>
        <begin position="189"/>
        <end position="196"/>
    </location>
</feature>
<feature type="helix" evidence="8">
    <location>
        <begin position="198"/>
        <end position="207"/>
    </location>
</feature>
<feature type="strand" evidence="8">
    <location>
        <begin position="212"/>
        <end position="220"/>
    </location>
</feature>
<feature type="strand" evidence="8">
    <location>
        <begin position="226"/>
        <end position="231"/>
    </location>
</feature>
<feature type="helix" evidence="8">
    <location>
        <begin position="235"/>
        <end position="239"/>
    </location>
</feature>
<feature type="strand" evidence="8">
    <location>
        <begin position="240"/>
        <end position="243"/>
    </location>
</feature>
<feature type="helix" evidence="7">
    <location>
        <begin position="282"/>
        <end position="284"/>
    </location>
</feature>
<feature type="strand" evidence="7">
    <location>
        <begin position="286"/>
        <end position="289"/>
    </location>
</feature>
<feature type="helix" evidence="7">
    <location>
        <begin position="290"/>
        <end position="292"/>
    </location>
</feature>
<feature type="strand" evidence="7">
    <location>
        <begin position="299"/>
        <end position="303"/>
    </location>
</feature>
<feature type="helix" evidence="7">
    <location>
        <begin position="311"/>
        <end position="313"/>
    </location>
</feature>
<feature type="strand" evidence="7">
    <location>
        <begin position="315"/>
        <end position="317"/>
    </location>
</feature>
<feature type="strand" evidence="7">
    <location>
        <begin position="321"/>
        <end position="325"/>
    </location>
</feature>
<feature type="strand" evidence="7">
    <location>
        <begin position="328"/>
        <end position="333"/>
    </location>
</feature>
<feature type="strand" evidence="7">
    <location>
        <begin position="340"/>
        <end position="344"/>
    </location>
</feature>
<feature type="turn" evidence="7">
    <location>
        <begin position="346"/>
        <end position="348"/>
    </location>
</feature>
<feature type="helix" evidence="7">
    <location>
        <begin position="351"/>
        <end position="353"/>
    </location>
</feature>
<feature type="strand" evidence="7">
    <location>
        <begin position="364"/>
        <end position="366"/>
    </location>
</feature>
<feature type="turn" evidence="7">
    <location>
        <begin position="367"/>
        <end position="370"/>
    </location>
</feature>
<feature type="strand" evidence="7">
    <location>
        <begin position="371"/>
        <end position="374"/>
    </location>
</feature>
<feature type="strand" evidence="7">
    <location>
        <begin position="385"/>
        <end position="387"/>
    </location>
</feature>
<feature type="helix" evidence="7">
    <location>
        <begin position="393"/>
        <end position="395"/>
    </location>
</feature>
<feature type="strand" evidence="7">
    <location>
        <begin position="398"/>
        <end position="401"/>
    </location>
</feature>
<feature type="strand" evidence="7">
    <location>
        <begin position="406"/>
        <end position="408"/>
    </location>
</feature>
<feature type="helix" evidence="7">
    <location>
        <begin position="413"/>
        <end position="415"/>
    </location>
</feature>
<feature type="strand" evidence="7">
    <location>
        <begin position="417"/>
        <end position="421"/>
    </location>
</feature>
<feature type="strand" evidence="7">
    <location>
        <begin position="424"/>
        <end position="428"/>
    </location>
</feature>
<feature type="helix" evidence="7">
    <location>
        <begin position="435"/>
        <end position="437"/>
    </location>
</feature>
<feature type="strand" evidence="7">
    <location>
        <begin position="439"/>
        <end position="441"/>
    </location>
</feature>
<feature type="strand" evidence="7">
    <location>
        <begin position="447"/>
        <end position="449"/>
    </location>
</feature>
<feature type="strand" evidence="7">
    <location>
        <begin position="452"/>
        <end position="463"/>
    </location>
</feature>
<feature type="strand" evidence="7">
    <location>
        <begin position="467"/>
        <end position="473"/>
    </location>
</feature>
<feature type="helix" evidence="7">
    <location>
        <begin position="478"/>
        <end position="480"/>
    </location>
</feature>
<feature type="strand" evidence="7">
    <location>
        <begin position="490"/>
        <end position="492"/>
    </location>
</feature>
<feature type="turn" evidence="7">
    <location>
        <begin position="493"/>
        <end position="496"/>
    </location>
</feature>
<feature type="strand" evidence="7">
    <location>
        <begin position="497"/>
        <end position="501"/>
    </location>
</feature>
<feature type="helix" evidence="7">
    <location>
        <begin position="502"/>
        <end position="504"/>
    </location>
</feature>
<feature type="helix" evidence="7">
    <location>
        <begin position="506"/>
        <end position="508"/>
    </location>
</feature>
<feature type="strand" evidence="7">
    <location>
        <begin position="511"/>
        <end position="514"/>
    </location>
</feature>
<feature type="helix" evidence="7">
    <location>
        <begin position="520"/>
        <end position="522"/>
    </location>
</feature>
<name>ABRA_ABRPR</name>
<accession>P11140</accession>
<accession>P28589</accession>
<protein>
    <recommendedName>
        <fullName>Abrin-a</fullName>
    </recommendedName>
    <component>
        <recommendedName>
            <fullName>Abrin-a A chain</fullName>
            <ecNumber>3.2.2.22</ecNumber>
        </recommendedName>
        <alternativeName>
            <fullName>rRNA N-glycosidase</fullName>
        </alternativeName>
    </component>
    <component>
        <recommendedName>
            <fullName>Linker peptide</fullName>
        </recommendedName>
    </component>
    <component>
        <recommendedName>
            <fullName>Abrin-a B chain</fullName>
        </recommendedName>
    </component>
</protein>
<keyword id="KW-0002">3D-structure</keyword>
<keyword id="KW-0903">Direct protein sequencing</keyword>
<keyword id="KW-1015">Disulfide bond</keyword>
<keyword id="KW-0325">Glycoprotein</keyword>
<keyword id="KW-0378">Hydrolase</keyword>
<keyword id="KW-0430">Lectin</keyword>
<keyword id="KW-0611">Plant defense</keyword>
<keyword id="KW-0652">Protein synthesis inhibitor</keyword>
<keyword id="KW-0873">Pyrrolidone carboxylic acid</keyword>
<keyword id="KW-1185">Reference proteome</keyword>
<keyword id="KW-0677">Repeat</keyword>
<keyword id="KW-0800">Toxin</keyword>
<reference key="1">
    <citation type="journal article" date="1993" name="J. Mol. Biol.">
        <title>Primary structure of three distinct isoabrins determined by cDNA sequencing. Conservation and significance.</title>
        <authorList>
            <person name="Hung C.-H."/>
            <person name="Lee M.-C."/>
            <person name="Lee T.-C."/>
            <person name="Lin J.-Y."/>
        </authorList>
    </citation>
    <scope>NUCLEOTIDE SEQUENCE [MRNA]</scope>
</reference>
<reference key="2">
    <citation type="journal article" date="1988" name="Agric. Biol. Chem.">
        <title>The complete amino acid sequence of the A-chain of abrin-a, a toxic protein from the seeds of Abrus precatorius.</title>
        <authorList>
            <person name="Funatsu G."/>
            <person name="Taguchi Y."/>
            <person name="Kamenosono M."/>
            <person name="Yanaka M."/>
        </authorList>
    </citation>
    <scope>PROTEIN SEQUENCE OF 1-251</scope>
    <scope>PYROGLUTAMATE FORMATION AT GLN-1</scope>
    <source>
        <tissue>Seed</tissue>
    </source>
</reference>
<reference key="3">
    <citation type="journal article" date="1991" name="J. Biol. Chem.">
        <title>Direct molecular cloning and expression of two distinct abrin A-chains.</title>
        <authorList>
            <person name="Evensen G."/>
            <person name="Mathiesen A."/>
            <person name="Sundan A."/>
        </authorList>
    </citation>
    <scope>NUCLEOTIDE SEQUENCE [GENOMIC DNA] OF 1-251</scope>
    <source>
        <tissue>Leaf</tissue>
    </source>
</reference>
<reference key="4">
    <citation type="journal article" date="1992" name="FEBS Lett.">
        <title>The complete primary structure of abrin-a B chain.</title>
        <authorList>
            <person name="Chen Y.-L."/>
            <person name="Chow L.-P."/>
            <person name="Tsugita A."/>
            <person name="Lin J.-Y."/>
        </authorList>
    </citation>
    <scope>PROTEIN SEQUENCE OF 262-528</scope>
</reference>
<reference key="5">
    <citation type="journal article" date="2000" name="J. Biol. Chem.">
        <title>Primary structure and function analysis of the Abrus precatorius agglutinin A chain by site-directed mutagenesis. Pro(199) Of amphiphilic alpha-helix H impairs protein synthesis inhibitory activity.</title>
        <authorList>
            <person name="Liu C.-L."/>
            <person name="Tsai C.-C."/>
            <person name="Lin S.-C."/>
            <person name="Wang L.-I."/>
            <person name="Hsu C.-I."/>
            <person name="Hwang M.-J."/>
            <person name="Lin J.-Y."/>
        </authorList>
    </citation>
    <scope>MUTAGENESIS OF ASN-200</scope>
</reference>
<reference key="6">
    <citation type="journal article" date="1995" name="J. Mol. Biol.">
        <title>Crystal structure of abrin-a at 2.14 A.</title>
        <authorList>
            <person name="Tahirov T.H."/>
            <person name="Lu T.-H."/>
            <person name="Liaw Y.-C."/>
            <person name="Chen Y.-L."/>
            <person name="Lin J.-Y."/>
        </authorList>
    </citation>
    <scope>X-RAY CRYSTALLOGRAPHY (2.14 ANGSTROMS)</scope>
</reference>
<reference key="7">
    <citation type="journal article" date="1995" name="J. Mol. Biol.">
        <authorList>
            <person name="Tahirov T.H."/>
            <person name="Lu T.-H."/>
            <person name="Liaw Y.-C."/>
            <person name="Chen Y.-L."/>
            <person name="Lin J.-Y."/>
        </authorList>
    </citation>
    <scope>ERRATUM OF PUBMED:7608980</scope>
</reference>
<organism>
    <name type="scientific">Abrus precatorius</name>
    <name type="common">Indian licorice</name>
    <name type="synonym">Glycine abrus</name>
    <dbReference type="NCBI Taxonomy" id="3816"/>
    <lineage>
        <taxon>Eukaryota</taxon>
        <taxon>Viridiplantae</taxon>
        <taxon>Streptophyta</taxon>
        <taxon>Embryophyta</taxon>
        <taxon>Tracheophyta</taxon>
        <taxon>Spermatophyta</taxon>
        <taxon>Magnoliopsida</taxon>
        <taxon>eudicotyledons</taxon>
        <taxon>Gunneridae</taxon>
        <taxon>Pentapetalae</taxon>
        <taxon>rosids</taxon>
        <taxon>fabids</taxon>
        <taxon>Fabales</taxon>
        <taxon>Fabaceae</taxon>
        <taxon>Papilionoideae</taxon>
        <taxon>50 kb inversion clade</taxon>
        <taxon>NPAAA clade</taxon>
        <taxon>indigoferoid/millettioid clade</taxon>
        <taxon>Abreae</taxon>
        <taxon>Abrus</taxon>
    </lineage>
</organism>
<sequence>QDRPIKFSTEGATSQSYKQFIEALRERLRGGLIHDIPVLPDPTTLQERNRYITVELSNSDTESIEVGIDVTNAYVVAYRAGTQSYFLRDAPSSASDYLFTGTDQHSLPFYGTYGDLERWAHQSRQQIPLGLQALTHGISFFRSGGNDNEEKARTLIVIIQMVAEAARFRYISNRVRVSIQTGTAFQPDAAMISLENNWDNLSRGVQESVQDTFPNQVTLTNIRNEPVIVDSLSHPTVAVLALMLFVCNPPNANQSPLLIRSIVEKSKICSSRYEPTVRIGGRDGMCVDVYDNGYHNGNRIIMWKCKDRLEENQLWTLKSDKTIRSNGKCLTTYGYAPGSYVMIYDCTSAVAEATYWEIWDNGTIINPKSALVLSAESSSMGGTLTVQTNEYLMRQGWRTGNNTSPFVTSISGYSDLCMQAQGSNVWMADCDSNKKEQQWALYTDGSIRSVQNTNNCLTSKDHKQGSTILLMGCSNGWASQRWVFKNDGSIYSLYDDMVMDVKGSDPSLKQIILWPYTGKPNQIWLTLF</sequence>
<dbReference type="EC" id="3.2.2.22"/>
<dbReference type="EMBL" id="M98344">
    <property type="protein sequence ID" value="AAA32624.1"/>
    <property type="molecule type" value="mRNA"/>
</dbReference>
<dbReference type="EMBL" id="X54872">
    <property type="status" value="NOT_ANNOTATED_CDS"/>
    <property type="molecule type" value="Genomic_DNA"/>
</dbReference>
<dbReference type="PIR" id="S32429">
    <property type="entry name" value="TZLSA"/>
</dbReference>
<dbReference type="PDB" id="1ABR">
    <property type="method" value="X-ray"/>
    <property type="resolution" value="2.14 A"/>
    <property type="chains" value="A=2-251, B=262-528"/>
</dbReference>
<dbReference type="PDB" id="5Z37">
    <property type="method" value="X-ray"/>
    <property type="resolution" value="1.30 A"/>
    <property type="chains" value="A=1-251"/>
</dbReference>
<dbReference type="PDB" id="5Z3I">
    <property type="method" value="X-ray"/>
    <property type="resolution" value="1.65 A"/>
    <property type="chains" value="A=1-251"/>
</dbReference>
<dbReference type="PDB" id="5Z3J">
    <property type="method" value="X-ray"/>
    <property type="resolution" value="1.70 A"/>
    <property type="chains" value="A=1-251"/>
</dbReference>
<dbReference type="PDBsum" id="1ABR"/>
<dbReference type="PDBsum" id="5Z37"/>
<dbReference type="PDBsum" id="5Z3I"/>
<dbReference type="PDBsum" id="5Z3J"/>
<dbReference type="SMR" id="P11140"/>
<dbReference type="UniLectin" id="P11140"/>
<dbReference type="ABCD" id="P11140">
    <property type="antibodies" value="1 sequenced antibody"/>
</dbReference>
<dbReference type="EvolutionaryTrace" id="P11140"/>
<dbReference type="Proteomes" id="UP000694853">
    <property type="component" value="Unplaced"/>
</dbReference>
<dbReference type="GO" id="GO:0005534">
    <property type="term" value="F:galactose binding"/>
    <property type="evidence" value="ECO:0000304"/>
    <property type="project" value="UniProtKB"/>
</dbReference>
<dbReference type="GO" id="GO:0030598">
    <property type="term" value="F:rRNA N-glycosylase activity"/>
    <property type="evidence" value="ECO:0000304"/>
    <property type="project" value="UniProtKB"/>
</dbReference>
<dbReference type="GO" id="GO:0090729">
    <property type="term" value="F:toxin activity"/>
    <property type="evidence" value="ECO:0007669"/>
    <property type="project" value="UniProtKB-KW"/>
</dbReference>
<dbReference type="GO" id="GO:0006952">
    <property type="term" value="P:defense response"/>
    <property type="evidence" value="ECO:0007669"/>
    <property type="project" value="UniProtKB-KW"/>
</dbReference>
<dbReference type="GO" id="GO:0017148">
    <property type="term" value="P:negative regulation of translation"/>
    <property type="evidence" value="ECO:0000304"/>
    <property type="project" value="UniProtKB"/>
</dbReference>
<dbReference type="GO" id="GO:0045807">
    <property type="term" value="P:positive regulation of endocytosis"/>
    <property type="evidence" value="ECO:0000304"/>
    <property type="project" value="UniProtKB"/>
</dbReference>
<dbReference type="CDD" id="cd23484">
    <property type="entry name" value="beta-trefoil_Ricin_abrin-like_rpt1"/>
    <property type="match status" value="1"/>
</dbReference>
<dbReference type="CDD" id="cd23491">
    <property type="entry name" value="beta-trefoil_Ricin_abrin-like_rpt2"/>
    <property type="match status" value="1"/>
</dbReference>
<dbReference type="FunFam" id="2.80.10.50:FF:000076">
    <property type="entry name" value="Beta-galactoside-specific lectin 1"/>
    <property type="match status" value="1"/>
</dbReference>
<dbReference type="FunFam" id="2.80.10.50:FF:000079">
    <property type="entry name" value="Ricin"/>
    <property type="match status" value="1"/>
</dbReference>
<dbReference type="FunFam" id="3.40.420.10:FF:000001">
    <property type="entry name" value="Ricin"/>
    <property type="match status" value="1"/>
</dbReference>
<dbReference type="Gene3D" id="2.80.10.50">
    <property type="match status" value="2"/>
</dbReference>
<dbReference type="Gene3D" id="3.40.420.10">
    <property type="entry name" value="Ricin (A subunit), domain 1"/>
    <property type="match status" value="1"/>
</dbReference>
<dbReference type="Gene3D" id="4.10.470.10">
    <property type="entry name" value="Ricin (A Subunit), domain 2"/>
    <property type="match status" value="1"/>
</dbReference>
<dbReference type="InterPro" id="IPR036041">
    <property type="entry name" value="Ribosome-inact_prot_sf"/>
</dbReference>
<dbReference type="InterPro" id="IPR017989">
    <property type="entry name" value="Ribosome_inactivat_1/2"/>
</dbReference>
<dbReference type="InterPro" id="IPR001574">
    <property type="entry name" value="Ribosome_inactivat_prot"/>
</dbReference>
<dbReference type="InterPro" id="IPR017988">
    <property type="entry name" value="Ribosome_inactivat_prot_CS"/>
</dbReference>
<dbReference type="InterPro" id="IPR016138">
    <property type="entry name" value="Ribosome_inactivat_prot_sub1"/>
</dbReference>
<dbReference type="InterPro" id="IPR016139">
    <property type="entry name" value="Ribosome_inactivat_prot_sub2"/>
</dbReference>
<dbReference type="InterPro" id="IPR035992">
    <property type="entry name" value="Ricin_B-like_lectins"/>
</dbReference>
<dbReference type="InterPro" id="IPR000772">
    <property type="entry name" value="Ricin_B_lectin"/>
</dbReference>
<dbReference type="PANTHER" id="PTHR33453">
    <property type="match status" value="1"/>
</dbReference>
<dbReference type="PANTHER" id="PTHR33453:SF34">
    <property type="entry name" value="RIBOSOME-INACTIVATING PROTEIN"/>
    <property type="match status" value="1"/>
</dbReference>
<dbReference type="Pfam" id="PF00652">
    <property type="entry name" value="Ricin_B_lectin"/>
    <property type="match status" value="2"/>
</dbReference>
<dbReference type="Pfam" id="PF00161">
    <property type="entry name" value="RIP"/>
    <property type="match status" value="1"/>
</dbReference>
<dbReference type="PRINTS" id="PR00396">
    <property type="entry name" value="SHIGARICIN"/>
</dbReference>
<dbReference type="SMART" id="SM00458">
    <property type="entry name" value="RICIN"/>
    <property type="match status" value="2"/>
</dbReference>
<dbReference type="SUPFAM" id="SSF56371">
    <property type="entry name" value="Ribosome inactivating proteins (RIP)"/>
    <property type="match status" value="1"/>
</dbReference>
<dbReference type="SUPFAM" id="SSF50370">
    <property type="entry name" value="Ricin B-like lectins"/>
    <property type="match status" value="2"/>
</dbReference>
<dbReference type="PROSITE" id="PS50231">
    <property type="entry name" value="RICIN_B_LECTIN"/>
    <property type="match status" value="2"/>
</dbReference>
<dbReference type="PROSITE" id="PS00275">
    <property type="entry name" value="SHIGA_RICIN"/>
    <property type="match status" value="1"/>
</dbReference>
<comment type="function">
    <text>The A chain is responsible for inhibiting protein synthesis through the catalytic inactivation of 60S ribosomal subunits by removing adenine from position 4,324 of 28S rRNA. Abrin-a is more toxic than ricin.</text>
</comment>
<comment type="function">
    <text>The B chain is a galactose-specific lectin that facilitates the binding of abrin to the cell membrane that precedes endocytosis.</text>
</comment>
<comment type="catalytic activity">
    <reaction>
        <text>Endohydrolysis of the N-glycosidic bond at one specific adenosine on the 28S rRNA.</text>
        <dbReference type="EC" id="3.2.2.22"/>
    </reaction>
</comment>
<comment type="subunit">
    <text>Disulfide-linked dimer of A and B chains.</text>
</comment>
<comment type="domain">
    <text>The B chain is composed of two domains, each domain consists of 3 homologous subdomains (alpha, beta, gamma).</text>
</comment>
<comment type="similarity">
    <text evidence="6">In the N-terminal section; belongs to the ribosome-inactivating protein family. Type 2 RIP subfamily.</text>
</comment>
<evidence type="ECO:0000250" key="1"/>
<evidence type="ECO:0000255" key="2">
    <source>
        <dbReference type="PROSITE-ProRule" id="PRU00174"/>
    </source>
</evidence>
<evidence type="ECO:0000269" key="3">
    <source>
    </source>
</evidence>
<evidence type="ECO:0000269" key="4">
    <source>
    </source>
</evidence>
<evidence type="ECO:0000269" key="5">
    <source ref="2"/>
</evidence>
<evidence type="ECO:0000305" key="6"/>
<evidence type="ECO:0007829" key="7">
    <source>
        <dbReference type="PDB" id="1ABR"/>
    </source>
</evidence>
<evidence type="ECO:0007829" key="8">
    <source>
        <dbReference type="PDB" id="5Z37"/>
    </source>
</evidence>